<protein>
    <recommendedName>
        <fullName evidence="1">S-adenosylmethionine synthase</fullName>
        <shortName evidence="1">AdoMet synthase</shortName>
        <ecNumber evidence="1">2.5.1.6</ecNumber>
    </recommendedName>
    <alternativeName>
        <fullName evidence="1">MAT</fullName>
    </alternativeName>
    <alternativeName>
        <fullName evidence="1">Methionine adenosyltransferase</fullName>
    </alternativeName>
</protein>
<comment type="function">
    <text evidence="1">Catalyzes the formation of S-adenosylmethionine (AdoMet) from methionine and ATP. The overall synthetic reaction is composed of two sequential steps, AdoMet formation and the subsequent tripolyphosphate hydrolysis which occurs prior to release of AdoMet from the enzyme.</text>
</comment>
<comment type="catalytic activity">
    <reaction evidence="1">
        <text>L-methionine + ATP + H2O = S-adenosyl-L-methionine + phosphate + diphosphate</text>
        <dbReference type="Rhea" id="RHEA:21080"/>
        <dbReference type="ChEBI" id="CHEBI:15377"/>
        <dbReference type="ChEBI" id="CHEBI:30616"/>
        <dbReference type="ChEBI" id="CHEBI:33019"/>
        <dbReference type="ChEBI" id="CHEBI:43474"/>
        <dbReference type="ChEBI" id="CHEBI:57844"/>
        <dbReference type="ChEBI" id="CHEBI:59789"/>
        <dbReference type="EC" id="2.5.1.6"/>
    </reaction>
</comment>
<comment type="cofactor">
    <cofactor evidence="1">
        <name>Mg(2+)</name>
        <dbReference type="ChEBI" id="CHEBI:18420"/>
    </cofactor>
    <text evidence="1">Binds 2 divalent ions per subunit.</text>
</comment>
<comment type="cofactor">
    <cofactor evidence="1">
        <name>K(+)</name>
        <dbReference type="ChEBI" id="CHEBI:29103"/>
    </cofactor>
    <text evidence="1">Binds 1 potassium ion per subunit.</text>
</comment>
<comment type="pathway">
    <text evidence="1">Amino-acid biosynthesis; S-adenosyl-L-methionine biosynthesis; S-adenosyl-L-methionine from L-methionine: step 1/1.</text>
</comment>
<comment type="subunit">
    <text evidence="1">Homotetramer; dimer of dimers.</text>
</comment>
<comment type="subcellular location">
    <subcellularLocation>
        <location evidence="1">Cytoplasm</location>
    </subcellularLocation>
</comment>
<comment type="similarity">
    <text evidence="1">Belongs to the AdoMet synthase family.</text>
</comment>
<gene>
    <name evidence="1" type="primary">metK</name>
    <name type="ordered locus">LCA_0468</name>
</gene>
<evidence type="ECO:0000255" key="1">
    <source>
        <dbReference type="HAMAP-Rule" id="MF_00086"/>
    </source>
</evidence>
<organism>
    <name type="scientific">Latilactobacillus sakei subsp. sakei (strain 23K)</name>
    <name type="common">Lactobacillus sakei subsp. sakei</name>
    <dbReference type="NCBI Taxonomy" id="314315"/>
    <lineage>
        <taxon>Bacteria</taxon>
        <taxon>Bacillati</taxon>
        <taxon>Bacillota</taxon>
        <taxon>Bacilli</taxon>
        <taxon>Lactobacillales</taxon>
        <taxon>Lactobacillaceae</taxon>
        <taxon>Latilactobacillus</taxon>
    </lineage>
</organism>
<sequence length="399" mass="43739">MQERHLFTSESVSEGHPDKIADQISDAILDAMLEQDPQARVACETTVTTGLVLVVGEISTTAYVDIQKVVRETIKKIGYRDGQYGFDGDNCAVIVALDEQSPDIAQGVDDSLESREKDEDPLDKIGAGDQGLMFGFAVDQTPELMPLPIALSHRLMRKVAELRKSGQLAYLRPDAKAQVTVEYDENEQPKRVDTVVISTQHDEDVTLETIQKDMLEQVIKTVIPAEYLDDKTKYFINPTGRFVIGGPQGDSGLTGRKIIVDTYGGYARHGGGAFSGKDATKVDRSASYAARYIAKNIVAAGLARKCEVQLAYAIGVAQPVSVSVNTFETGTVSEEAIQTAIRENFDLRPAGIIKMLDLQRPIYKQTAAYGHFGRTDVDLSWERLDKVDALKASIAKLNH</sequence>
<dbReference type="EC" id="2.5.1.6" evidence="1"/>
<dbReference type="EMBL" id="CR936503">
    <property type="protein sequence ID" value="CAI54769.1"/>
    <property type="molecule type" value="Genomic_DNA"/>
</dbReference>
<dbReference type="RefSeq" id="WP_011374177.1">
    <property type="nucleotide sequence ID" value="NC_007576.1"/>
</dbReference>
<dbReference type="SMR" id="Q38YF8"/>
<dbReference type="STRING" id="314315.LCA_0468"/>
<dbReference type="KEGG" id="lsa:LCA_0468"/>
<dbReference type="eggNOG" id="COG0192">
    <property type="taxonomic scope" value="Bacteria"/>
</dbReference>
<dbReference type="HOGENOM" id="CLU_041802_1_1_9"/>
<dbReference type="OrthoDB" id="9801686at2"/>
<dbReference type="UniPathway" id="UPA00315">
    <property type="reaction ID" value="UER00080"/>
</dbReference>
<dbReference type="Proteomes" id="UP000002707">
    <property type="component" value="Chromosome"/>
</dbReference>
<dbReference type="GO" id="GO:0005737">
    <property type="term" value="C:cytoplasm"/>
    <property type="evidence" value="ECO:0007669"/>
    <property type="project" value="UniProtKB-SubCell"/>
</dbReference>
<dbReference type="GO" id="GO:0005524">
    <property type="term" value="F:ATP binding"/>
    <property type="evidence" value="ECO:0007669"/>
    <property type="project" value="UniProtKB-UniRule"/>
</dbReference>
<dbReference type="GO" id="GO:0000287">
    <property type="term" value="F:magnesium ion binding"/>
    <property type="evidence" value="ECO:0007669"/>
    <property type="project" value="UniProtKB-UniRule"/>
</dbReference>
<dbReference type="GO" id="GO:0004478">
    <property type="term" value="F:methionine adenosyltransferase activity"/>
    <property type="evidence" value="ECO:0007669"/>
    <property type="project" value="UniProtKB-UniRule"/>
</dbReference>
<dbReference type="GO" id="GO:0006730">
    <property type="term" value="P:one-carbon metabolic process"/>
    <property type="evidence" value="ECO:0007669"/>
    <property type="project" value="UniProtKB-KW"/>
</dbReference>
<dbReference type="GO" id="GO:0006556">
    <property type="term" value="P:S-adenosylmethionine biosynthetic process"/>
    <property type="evidence" value="ECO:0007669"/>
    <property type="project" value="UniProtKB-UniRule"/>
</dbReference>
<dbReference type="CDD" id="cd18079">
    <property type="entry name" value="S-AdoMet_synt"/>
    <property type="match status" value="1"/>
</dbReference>
<dbReference type="FunFam" id="3.30.300.10:FF:000003">
    <property type="entry name" value="S-adenosylmethionine synthase"/>
    <property type="match status" value="1"/>
</dbReference>
<dbReference type="FunFam" id="3.30.300.10:FF:000004">
    <property type="entry name" value="S-adenosylmethionine synthase"/>
    <property type="match status" value="1"/>
</dbReference>
<dbReference type="Gene3D" id="3.30.300.10">
    <property type="match status" value="3"/>
</dbReference>
<dbReference type="HAMAP" id="MF_00086">
    <property type="entry name" value="S_AdoMet_synth1"/>
    <property type="match status" value="1"/>
</dbReference>
<dbReference type="InterPro" id="IPR022631">
    <property type="entry name" value="ADOMET_SYNTHASE_CS"/>
</dbReference>
<dbReference type="InterPro" id="IPR022630">
    <property type="entry name" value="S-AdoMet_synt_C"/>
</dbReference>
<dbReference type="InterPro" id="IPR022629">
    <property type="entry name" value="S-AdoMet_synt_central"/>
</dbReference>
<dbReference type="InterPro" id="IPR022628">
    <property type="entry name" value="S-AdoMet_synt_N"/>
</dbReference>
<dbReference type="InterPro" id="IPR002133">
    <property type="entry name" value="S-AdoMet_synthetase"/>
</dbReference>
<dbReference type="InterPro" id="IPR022636">
    <property type="entry name" value="S-AdoMet_synthetase_sfam"/>
</dbReference>
<dbReference type="NCBIfam" id="TIGR01034">
    <property type="entry name" value="metK"/>
    <property type="match status" value="1"/>
</dbReference>
<dbReference type="PANTHER" id="PTHR11964">
    <property type="entry name" value="S-ADENOSYLMETHIONINE SYNTHETASE"/>
    <property type="match status" value="1"/>
</dbReference>
<dbReference type="Pfam" id="PF02773">
    <property type="entry name" value="S-AdoMet_synt_C"/>
    <property type="match status" value="1"/>
</dbReference>
<dbReference type="Pfam" id="PF02772">
    <property type="entry name" value="S-AdoMet_synt_M"/>
    <property type="match status" value="1"/>
</dbReference>
<dbReference type="Pfam" id="PF00438">
    <property type="entry name" value="S-AdoMet_synt_N"/>
    <property type="match status" value="1"/>
</dbReference>
<dbReference type="PIRSF" id="PIRSF000497">
    <property type="entry name" value="MAT"/>
    <property type="match status" value="1"/>
</dbReference>
<dbReference type="SUPFAM" id="SSF55973">
    <property type="entry name" value="S-adenosylmethionine synthetase"/>
    <property type="match status" value="3"/>
</dbReference>
<dbReference type="PROSITE" id="PS00376">
    <property type="entry name" value="ADOMET_SYNTHASE_1"/>
    <property type="match status" value="1"/>
</dbReference>
<dbReference type="PROSITE" id="PS00377">
    <property type="entry name" value="ADOMET_SYNTHASE_2"/>
    <property type="match status" value="1"/>
</dbReference>
<name>METK_LATSS</name>
<accession>Q38YF8</accession>
<reference key="1">
    <citation type="journal article" date="2005" name="Nat. Biotechnol.">
        <title>The complete genome sequence of the meat-borne lactic acid bacterium Lactobacillus sakei 23K.</title>
        <authorList>
            <person name="Chaillou S."/>
            <person name="Champomier-Verges M.-C."/>
            <person name="Cornet M."/>
            <person name="Crutz-Le Coq A.-M."/>
            <person name="Dudez A.-M."/>
            <person name="Martin V."/>
            <person name="Beaufils S."/>
            <person name="Darbon-Rongere E."/>
            <person name="Bossy R."/>
            <person name="Loux V."/>
            <person name="Zagorec M."/>
        </authorList>
    </citation>
    <scope>NUCLEOTIDE SEQUENCE [LARGE SCALE GENOMIC DNA]</scope>
    <source>
        <strain>23K</strain>
    </source>
</reference>
<keyword id="KW-0067">ATP-binding</keyword>
<keyword id="KW-0963">Cytoplasm</keyword>
<keyword id="KW-0460">Magnesium</keyword>
<keyword id="KW-0479">Metal-binding</keyword>
<keyword id="KW-0547">Nucleotide-binding</keyword>
<keyword id="KW-0554">One-carbon metabolism</keyword>
<keyword id="KW-0630">Potassium</keyword>
<keyword id="KW-1185">Reference proteome</keyword>
<keyword id="KW-0808">Transferase</keyword>
<proteinExistence type="inferred from homology"/>
<feature type="chain" id="PRO_0000241003" description="S-adenosylmethionine synthase">
    <location>
        <begin position="1"/>
        <end position="399"/>
    </location>
</feature>
<feature type="region of interest" description="Flexible loop" evidence="1">
    <location>
        <begin position="100"/>
        <end position="110"/>
    </location>
</feature>
<feature type="binding site" description="in other chain" evidence="1">
    <location>
        <position position="16"/>
    </location>
    <ligand>
        <name>ATP</name>
        <dbReference type="ChEBI" id="CHEBI:30616"/>
        <note>ligand shared between two neighboring subunits</note>
    </ligand>
</feature>
<feature type="binding site" evidence="1">
    <location>
        <position position="18"/>
    </location>
    <ligand>
        <name>Mg(2+)</name>
        <dbReference type="ChEBI" id="CHEBI:18420"/>
    </ligand>
</feature>
<feature type="binding site" evidence="1">
    <location>
        <position position="44"/>
    </location>
    <ligand>
        <name>K(+)</name>
        <dbReference type="ChEBI" id="CHEBI:29103"/>
    </ligand>
</feature>
<feature type="binding site" description="in other chain" evidence="1">
    <location>
        <position position="57"/>
    </location>
    <ligand>
        <name>L-methionine</name>
        <dbReference type="ChEBI" id="CHEBI:57844"/>
        <note>ligand shared between two neighboring subunits</note>
    </ligand>
</feature>
<feature type="binding site" description="in other chain" evidence="1">
    <location>
        <position position="100"/>
    </location>
    <ligand>
        <name>L-methionine</name>
        <dbReference type="ChEBI" id="CHEBI:57844"/>
        <note>ligand shared between two neighboring subunits</note>
    </ligand>
</feature>
<feature type="binding site" description="in other chain" evidence="1">
    <location>
        <begin position="174"/>
        <end position="176"/>
    </location>
    <ligand>
        <name>ATP</name>
        <dbReference type="ChEBI" id="CHEBI:30616"/>
        <note>ligand shared between two neighboring subunits</note>
    </ligand>
</feature>
<feature type="binding site" description="in other chain" evidence="1">
    <location>
        <begin position="241"/>
        <end position="242"/>
    </location>
    <ligand>
        <name>ATP</name>
        <dbReference type="ChEBI" id="CHEBI:30616"/>
        <note>ligand shared between two neighboring subunits</note>
    </ligand>
</feature>
<feature type="binding site" evidence="1">
    <location>
        <position position="250"/>
    </location>
    <ligand>
        <name>ATP</name>
        <dbReference type="ChEBI" id="CHEBI:30616"/>
        <note>ligand shared between two neighboring subunits</note>
    </ligand>
</feature>
<feature type="binding site" evidence="1">
    <location>
        <position position="250"/>
    </location>
    <ligand>
        <name>L-methionine</name>
        <dbReference type="ChEBI" id="CHEBI:57844"/>
        <note>ligand shared between two neighboring subunits</note>
    </ligand>
</feature>
<feature type="binding site" description="in other chain" evidence="1">
    <location>
        <begin position="256"/>
        <end position="257"/>
    </location>
    <ligand>
        <name>ATP</name>
        <dbReference type="ChEBI" id="CHEBI:30616"/>
        <note>ligand shared between two neighboring subunits</note>
    </ligand>
</feature>
<feature type="binding site" evidence="1">
    <location>
        <position position="273"/>
    </location>
    <ligand>
        <name>ATP</name>
        <dbReference type="ChEBI" id="CHEBI:30616"/>
        <note>ligand shared between two neighboring subunits</note>
    </ligand>
</feature>
<feature type="binding site" evidence="1">
    <location>
        <position position="277"/>
    </location>
    <ligand>
        <name>ATP</name>
        <dbReference type="ChEBI" id="CHEBI:30616"/>
        <note>ligand shared between two neighboring subunits</note>
    </ligand>
</feature>
<feature type="binding site" description="in other chain" evidence="1">
    <location>
        <position position="281"/>
    </location>
    <ligand>
        <name>L-methionine</name>
        <dbReference type="ChEBI" id="CHEBI:57844"/>
        <note>ligand shared between two neighboring subunits</note>
    </ligand>
</feature>